<dbReference type="EC" id="2.4.2.9" evidence="1"/>
<dbReference type="EMBL" id="L42023">
    <property type="protein sequence ID" value="AAC22881.1"/>
    <property type="molecule type" value="Genomic_DNA"/>
</dbReference>
<dbReference type="PIR" id="E64111">
    <property type="entry name" value="E64111"/>
</dbReference>
<dbReference type="RefSeq" id="NP_439384.1">
    <property type="nucleotide sequence ID" value="NC_000907.1"/>
</dbReference>
<dbReference type="SMR" id="P43857"/>
<dbReference type="STRING" id="71421.HI_1228"/>
<dbReference type="EnsemblBacteria" id="AAC22881">
    <property type="protein sequence ID" value="AAC22881"/>
    <property type="gene ID" value="HI_1228"/>
</dbReference>
<dbReference type="KEGG" id="hin:HI_1228"/>
<dbReference type="PATRIC" id="fig|71421.8.peg.1280"/>
<dbReference type="eggNOG" id="COG0035">
    <property type="taxonomic scope" value="Bacteria"/>
</dbReference>
<dbReference type="HOGENOM" id="CLU_067096_2_2_6"/>
<dbReference type="OrthoDB" id="9781675at2"/>
<dbReference type="PhylomeDB" id="P43857"/>
<dbReference type="BioCyc" id="HINF71421:G1GJ1-1259-MONOMER"/>
<dbReference type="UniPathway" id="UPA00574">
    <property type="reaction ID" value="UER00636"/>
</dbReference>
<dbReference type="Proteomes" id="UP000000579">
    <property type="component" value="Chromosome"/>
</dbReference>
<dbReference type="GO" id="GO:0005525">
    <property type="term" value="F:GTP binding"/>
    <property type="evidence" value="ECO:0007669"/>
    <property type="project" value="UniProtKB-KW"/>
</dbReference>
<dbReference type="GO" id="GO:0000287">
    <property type="term" value="F:magnesium ion binding"/>
    <property type="evidence" value="ECO:0007669"/>
    <property type="project" value="UniProtKB-UniRule"/>
</dbReference>
<dbReference type="GO" id="GO:0004845">
    <property type="term" value="F:uracil phosphoribosyltransferase activity"/>
    <property type="evidence" value="ECO:0007669"/>
    <property type="project" value="UniProtKB-UniRule"/>
</dbReference>
<dbReference type="GO" id="GO:0044206">
    <property type="term" value="P:UMP salvage"/>
    <property type="evidence" value="ECO:0007669"/>
    <property type="project" value="UniProtKB-UniRule"/>
</dbReference>
<dbReference type="GO" id="GO:0006223">
    <property type="term" value="P:uracil salvage"/>
    <property type="evidence" value="ECO:0007669"/>
    <property type="project" value="InterPro"/>
</dbReference>
<dbReference type="CDD" id="cd06223">
    <property type="entry name" value="PRTases_typeI"/>
    <property type="match status" value="1"/>
</dbReference>
<dbReference type="FunFam" id="3.40.50.2020:FF:000003">
    <property type="entry name" value="Uracil phosphoribosyltransferase"/>
    <property type="match status" value="1"/>
</dbReference>
<dbReference type="Gene3D" id="3.40.50.2020">
    <property type="match status" value="1"/>
</dbReference>
<dbReference type="HAMAP" id="MF_01218_B">
    <property type="entry name" value="Upp_B"/>
    <property type="match status" value="1"/>
</dbReference>
<dbReference type="InterPro" id="IPR000836">
    <property type="entry name" value="PRibTrfase_dom"/>
</dbReference>
<dbReference type="InterPro" id="IPR029057">
    <property type="entry name" value="PRTase-like"/>
</dbReference>
<dbReference type="InterPro" id="IPR034332">
    <property type="entry name" value="Upp_B"/>
</dbReference>
<dbReference type="InterPro" id="IPR050054">
    <property type="entry name" value="UPRTase/APRTase"/>
</dbReference>
<dbReference type="InterPro" id="IPR005765">
    <property type="entry name" value="Ura_phspho_trans"/>
</dbReference>
<dbReference type="NCBIfam" id="NF001097">
    <property type="entry name" value="PRK00129.1"/>
    <property type="match status" value="1"/>
</dbReference>
<dbReference type="NCBIfam" id="TIGR01091">
    <property type="entry name" value="upp"/>
    <property type="match status" value="1"/>
</dbReference>
<dbReference type="PANTHER" id="PTHR32315">
    <property type="entry name" value="ADENINE PHOSPHORIBOSYLTRANSFERASE"/>
    <property type="match status" value="1"/>
</dbReference>
<dbReference type="PANTHER" id="PTHR32315:SF4">
    <property type="entry name" value="URACIL PHOSPHORIBOSYLTRANSFERASE, CHLOROPLASTIC"/>
    <property type="match status" value="1"/>
</dbReference>
<dbReference type="Pfam" id="PF14681">
    <property type="entry name" value="UPRTase"/>
    <property type="match status" value="1"/>
</dbReference>
<dbReference type="SUPFAM" id="SSF53271">
    <property type="entry name" value="PRTase-like"/>
    <property type="match status" value="1"/>
</dbReference>
<comment type="function">
    <text evidence="1">Catalyzes the conversion of uracil and 5-phospho-alpha-D-ribose 1-diphosphate (PRPP) to UMP and diphosphate.</text>
</comment>
<comment type="catalytic activity">
    <reaction evidence="1">
        <text>UMP + diphosphate = 5-phospho-alpha-D-ribose 1-diphosphate + uracil</text>
        <dbReference type="Rhea" id="RHEA:13017"/>
        <dbReference type="ChEBI" id="CHEBI:17568"/>
        <dbReference type="ChEBI" id="CHEBI:33019"/>
        <dbReference type="ChEBI" id="CHEBI:57865"/>
        <dbReference type="ChEBI" id="CHEBI:58017"/>
        <dbReference type="EC" id="2.4.2.9"/>
    </reaction>
</comment>
<comment type="cofactor">
    <cofactor evidence="1">
        <name>Mg(2+)</name>
        <dbReference type="ChEBI" id="CHEBI:18420"/>
    </cofactor>
    <text evidence="1">Binds 1 Mg(2+) ion per subunit. The magnesium is bound as Mg-PRPP.</text>
</comment>
<comment type="activity regulation">
    <text evidence="1">Allosterically activated by GTP.</text>
</comment>
<comment type="pathway">
    <text evidence="1">Pyrimidine metabolism; UMP biosynthesis via salvage pathway; UMP from uracil: step 1/1.</text>
</comment>
<comment type="similarity">
    <text evidence="1">Belongs to the UPRTase family.</text>
</comment>
<gene>
    <name evidence="1" type="primary">upp</name>
    <name type="ordered locus">HI_1228</name>
</gene>
<reference key="1">
    <citation type="journal article" date="1995" name="Science">
        <title>Whole-genome random sequencing and assembly of Haemophilus influenzae Rd.</title>
        <authorList>
            <person name="Fleischmann R.D."/>
            <person name="Adams M.D."/>
            <person name="White O."/>
            <person name="Clayton R.A."/>
            <person name="Kirkness E.F."/>
            <person name="Kerlavage A.R."/>
            <person name="Bult C.J."/>
            <person name="Tomb J.-F."/>
            <person name="Dougherty B.A."/>
            <person name="Merrick J.M."/>
            <person name="McKenney K."/>
            <person name="Sutton G.G."/>
            <person name="FitzHugh W."/>
            <person name="Fields C.A."/>
            <person name="Gocayne J.D."/>
            <person name="Scott J.D."/>
            <person name="Shirley R."/>
            <person name="Liu L.-I."/>
            <person name="Glodek A."/>
            <person name="Kelley J.M."/>
            <person name="Weidman J.F."/>
            <person name="Phillips C.A."/>
            <person name="Spriggs T."/>
            <person name="Hedblom E."/>
            <person name="Cotton M.D."/>
            <person name="Utterback T.R."/>
            <person name="Hanna M.C."/>
            <person name="Nguyen D.T."/>
            <person name="Saudek D.M."/>
            <person name="Brandon R.C."/>
            <person name="Fine L.D."/>
            <person name="Fritchman J.L."/>
            <person name="Fuhrmann J.L."/>
            <person name="Geoghagen N.S.M."/>
            <person name="Gnehm C.L."/>
            <person name="McDonald L.A."/>
            <person name="Small K.V."/>
            <person name="Fraser C.M."/>
            <person name="Smith H.O."/>
            <person name="Venter J.C."/>
        </authorList>
    </citation>
    <scope>NUCLEOTIDE SEQUENCE [LARGE SCALE GENOMIC DNA]</scope>
    <source>
        <strain>ATCC 51907 / DSM 11121 / KW20 / Rd</strain>
    </source>
</reference>
<feature type="chain" id="PRO_0000120834" description="Uracil phosphoribosyltransferase">
    <location>
        <begin position="1"/>
        <end position="208"/>
    </location>
</feature>
<feature type="binding site" evidence="1">
    <location>
        <position position="78"/>
    </location>
    <ligand>
        <name>5-phospho-alpha-D-ribose 1-diphosphate</name>
        <dbReference type="ChEBI" id="CHEBI:58017"/>
    </ligand>
</feature>
<feature type="binding site" evidence="1">
    <location>
        <position position="103"/>
    </location>
    <ligand>
        <name>5-phospho-alpha-D-ribose 1-diphosphate</name>
        <dbReference type="ChEBI" id="CHEBI:58017"/>
    </ligand>
</feature>
<feature type="binding site" evidence="1">
    <location>
        <begin position="130"/>
        <end position="138"/>
    </location>
    <ligand>
        <name>5-phospho-alpha-D-ribose 1-diphosphate</name>
        <dbReference type="ChEBI" id="CHEBI:58017"/>
    </ligand>
</feature>
<feature type="binding site" evidence="1">
    <location>
        <position position="193"/>
    </location>
    <ligand>
        <name>uracil</name>
        <dbReference type="ChEBI" id="CHEBI:17568"/>
    </ligand>
</feature>
<feature type="binding site" evidence="1">
    <location>
        <begin position="198"/>
        <end position="200"/>
    </location>
    <ligand>
        <name>uracil</name>
        <dbReference type="ChEBI" id="CHEBI:17568"/>
    </ligand>
</feature>
<feature type="binding site" evidence="1">
    <location>
        <position position="199"/>
    </location>
    <ligand>
        <name>5-phospho-alpha-D-ribose 1-diphosphate</name>
        <dbReference type="ChEBI" id="CHEBI:58017"/>
    </ligand>
</feature>
<evidence type="ECO:0000255" key="1">
    <source>
        <dbReference type="HAMAP-Rule" id="MF_01218"/>
    </source>
</evidence>
<keyword id="KW-0021">Allosteric enzyme</keyword>
<keyword id="KW-0328">Glycosyltransferase</keyword>
<keyword id="KW-0342">GTP-binding</keyword>
<keyword id="KW-0460">Magnesium</keyword>
<keyword id="KW-0547">Nucleotide-binding</keyword>
<keyword id="KW-1185">Reference proteome</keyword>
<keyword id="KW-0808">Transferase</keyword>
<protein>
    <recommendedName>
        <fullName evidence="1">Uracil phosphoribosyltransferase</fullName>
        <ecNumber evidence="1">2.4.2.9</ecNumber>
    </recommendedName>
    <alternativeName>
        <fullName evidence="1">UMP pyrophosphorylase</fullName>
    </alternativeName>
    <alternativeName>
        <fullName evidence="1">UPRTase</fullName>
    </alternativeName>
</protein>
<accession>P43857</accession>
<proteinExistence type="inferred from homology"/>
<organism>
    <name type="scientific">Haemophilus influenzae (strain ATCC 51907 / DSM 11121 / KW20 / Rd)</name>
    <dbReference type="NCBI Taxonomy" id="71421"/>
    <lineage>
        <taxon>Bacteria</taxon>
        <taxon>Pseudomonadati</taxon>
        <taxon>Pseudomonadota</taxon>
        <taxon>Gammaproteobacteria</taxon>
        <taxon>Pasteurellales</taxon>
        <taxon>Pasteurellaceae</taxon>
        <taxon>Haemophilus</taxon>
    </lineage>
</organism>
<name>UPP_HAEIN</name>
<sequence length="208" mass="22664">MKLVEVKHPLVKHKLGVMREAEIDTKKFRELATEIGSLLTYEATSDLETEKVTINGWNGPVEIDRIKGKKVTVVPILRAGLGMMDGVLEHVPSARISVVGIYRNEETLEPVPYFQKLASDLEERLSIVVDPMLATGGSMIATLDLLKAKGCKHIKVLVLVAAPEGIKALEAAHPDIELYCASIDSHLNEQGYIIPGLGDAGDKIFGTK</sequence>